<feature type="chain" id="PRO_1000117815" description="F420-dependent methylenetetrahydromethanopterin dehydrogenase">
    <location>
        <begin position="1"/>
        <end position="276"/>
    </location>
</feature>
<evidence type="ECO:0000255" key="1">
    <source>
        <dbReference type="HAMAP-Rule" id="MF_00058"/>
    </source>
</evidence>
<sequence length="276" mass="30221">MVVKIGIVKVGNIGTSVLIDMILDERADREDIDVRTISSGAKMGKNQMDDVLPKIDEYNPDVIIFISPDPGAKSPSSARETLSKKNIPTIVIGDGPGERAIGSMKEQGLGYIIVKADSMIGARREFLDATEMAVFNSDVLMVLSTTGVFRLIHKTLDKVIRDIDEDKLYSLPELVITAENAVDAADFKNPYAKSKAIAAYSIACQVSSMNVRACFKTKDYHVYIPLVSAAHEMMSAASKLAYEAREIEKSNDTVVRTAHRRNGSILYGTSLNDNKE</sequence>
<organism>
    <name type="scientific">Methanosphaera stadtmanae (strain ATCC 43021 / DSM 3091 / JCM 11832 / MCB-3)</name>
    <dbReference type="NCBI Taxonomy" id="339860"/>
    <lineage>
        <taxon>Archaea</taxon>
        <taxon>Methanobacteriati</taxon>
        <taxon>Methanobacteriota</taxon>
        <taxon>Methanomada group</taxon>
        <taxon>Methanobacteria</taxon>
        <taxon>Methanobacteriales</taxon>
        <taxon>Methanobacteriaceae</taxon>
        <taxon>Methanosphaera</taxon>
    </lineage>
</organism>
<name>MTD_METST</name>
<reference key="1">
    <citation type="journal article" date="2006" name="J. Bacteriol.">
        <title>The genome sequence of Methanosphaera stadtmanae reveals why this human intestinal archaeon is restricted to methanol and H2 for methane formation and ATP synthesis.</title>
        <authorList>
            <person name="Fricke W.F."/>
            <person name="Seedorf H."/>
            <person name="Henne A."/>
            <person name="Kruer M."/>
            <person name="Liesegang H."/>
            <person name="Hedderich R."/>
            <person name="Gottschalk G."/>
            <person name="Thauer R.K."/>
        </authorList>
    </citation>
    <scope>NUCLEOTIDE SEQUENCE [LARGE SCALE GENOMIC DNA]</scope>
    <source>
        <strain>ATCC 43021 / DSM 3091 / JCM 11832 / MCB-3</strain>
    </source>
</reference>
<keyword id="KW-0554">One-carbon metabolism</keyword>
<keyword id="KW-0560">Oxidoreductase</keyword>
<keyword id="KW-1185">Reference proteome</keyword>
<gene>
    <name evidence="1" type="primary">mtd</name>
    <name type="ordered locus">Msp_0163</name>
</gene>
<proteinExistence type="inferred from homology"/>
<dbReference type="EC" id="1.5.98.1" evidence="1"/>
<dbReference type="EMBL" id="CP000102">
    <property type="protein sequence ID" value="ABC56581.1"/>
    <property type="molecule type" value="Genomic_DNA"/>
</dbReference>
<dbReference type="RefSeq" id="WP_011405780.1">
    <property type="nucleotide sequence ID" value="NC_007681.1"/>
</dbReference>
<dbReference type="SMR" id="Q2NHQ2"/>
<dbReference type="STRING" id="339860.Msp_0163"/>
<dbReference type="KEGG" id="mst:Msp_0163"/>
<dbReference type="eggNOG" id="arCOG04382">
    <property type="taxonomic scope" value="Archaea"/>
</dbReference>
<dbReference type="HOGENOM" id="CLU_1006890_0_0_2"/>
<dbReference type="OrthoDB" id="49844at2157"/>
<dbReference type="Proteomes" id="UP000001931">
    <property type="component" value="Chromosome"/>
</dbReference>
<dbReference type="GO" id="GO:0008901">
    <property type="term" value="F:ferredoxin hydrogenase activity"/>
    <property type="evidence" value="ECO:0007669"/>
    <property type="project" value="InterPro"/>
</dbReference>
<dbReference type="GO" id="GO:0030268">
    <property type="term" value="F:methylenetetrahydromethanopterin dehydrogenase activity"/>
    <property type="evidence" value="ECO:0007669"/>
    <property type="project" value="UniProtKB-UniRule"/>
</dbReference>
<dbReference type="GO" id="GO:0019386">
    <property type="term" value="P:methanogenesis, from carbon dioxide"/>
    <property type="evidence" value="ECO:0007669"/>
    <property type="project" value="UniProtKB-UniRule"/>
</dbReference>
<dbReference type="GO" id="GO:0006730">
    <property type="term" value="P:one-carbon metabolic process"/>
    <property type="evidence" value="ECO:0007669"/>
    <property type="project" value="UniProtKB-UniRule"/>
</dbReference>
<dbReference type="Gene3D" id="6.10.140.120">
    <property type="match status" value="1"/>
</dbReference>
<dbReference type="Gene3D" id="3.40.50.10830">
    <property type="entry name" value="F420-dependent methylenetetrahydromethanopterin dehydrogenase (MTD)"/>
    <property type="match status" value="1"/>
</dbReference>
<dbReference type="HAMAP" id="MF_00058">
    <property type="entry name" value="MTD"/>
    <property type="match status" value="1"/>
</dbReference>
<dbReference type="InterPro" id="IPR002844">
    <property type="entry name" value="MTD"/>
</dbReference>
<dbReference type="InterPro" id="IPR036080">
    <property type="entry name" value="MTD_sf"/>
</dbReference>
<dbReference type="NCBIfam" id="NF002162">
    <property type="entry name" value="PRK00994.1"/>
    <property type="match status" value="1"/>
</dbReference>
<dbReference type="Pfam" id="PF01993">
    <property type="entry name" value="MTD"/>
    <property type="match status" value="1"/>
</dbReference>
<dbReference type="PIRSF" id="PIRSF005627">
    <property type="entry name" value="MTD"/>
    <property type="match status" value="1"/>
</dbReference>
<dbReference type="SUPFAM" id="SSF102324">
    <property type="entry name" value="F420-dependent methylenetetrahydromethanopterin dehydrogenase (MTD)"/>
    <property type="match status" value="1"/>
</dbReference>
<accession>Q2NHQ2</accession>
<comment type="function">
    <text evidence="1">Catalyzes the oxidation of methylene-H(4)MPT to methenyl-H(4)MPT(+).</text>
</comment>
<comment type="catalytic activity">
    <reaction evidence="1">
        <text>5,10-methylenetetrahydromethanopterin + oxidized coenzyme F420-(gamma-L-Glu)(n) + 2 H(+) = 5,10-methenyl-5,6,7,8-tetrahydromethanopterin + reduced coenzyme F420-(gamma-L-Glu)(n)</text>
        <dbReference type="Rhea" id="RHEA:16721"/>
        <dbReference type="Rhea" id="RHEA-COMP:12939"/>
        <dbReference type="Rhea" id="RHEA-COMP:14378"/>
        <dbReference type="ChEBI" id="CHEBI:15378"/>
        <dbReference type="ChEBI" id="CHEBI:57818"/>
        <dbReference type="ChEBI" id="CHEBI:58337"/>
        <dbReference type="ChEBI" id="CHEBI:133980"/>
        <dbReference type="ChEBI" id="CHEBI:139511"/>
        <dbReference type="EC" id="1.5.98.1"/>
    </reaction>
</comment>
<comment type="similarity">
    <text evidence="1">Belongs to the MTD family.</text>
</comment>
<protein>
    <recommendedName>
        <fullName evidence="1">F420-dependent methylenetetrahydromethanopterin dehydrogenase</fullName>
        <shortName evidence="1">MTD</shortName>
        <ecNumber evidence="1">1.5.98.1</ecNumber>
    </recommendedName>
    <alternativeName>
        <fullName evidence="1">Coenzyme F420-dependent N5,N10-methylenetetrahydromethanopterin dehydrogenase</fullName>
    </alternativeName>
</protein>